<sequence>MTENALPLLSAIEWLPEPSPLLTASLLDWLLEADSMTRRFEAHCQKVTVNLLREAFISPEEIAAEAALLPPEKQYWLREIELCADGIPWLVARTLVPESTLVGPEQKLRQLGSVPLGRYLFASSSLTRDFIDVGQSAGLWARRSRLRLAGKPLLLTELFLPASPLYGSLAKENT</sequence>
<protein>
    <recommendedName>
        <fullName evidence="1">Chorismate pyruvate-lyase</fullName>
        <shortName evidence="1">CL</shortName>
        <shortName evidence="1">CPL</shortName>
        <ecNumber evidence="1">4.1.3.40</ecNumber>
    </recommendedName>
</protein>
<evidence type="ECO:0000255" key="1">
    <source>
        <dbReference type="HAMAP-Rule" id="MF_01632"/>
    </source>
</evidence>
<accession>B2VKA5</accession>
<name>UBIC_ERWT9</name>
<feature type="chain" id="PRO_1000186528" description="Chorismate pyruvate-lyase">
    <location>
        <begin position="1"/>
        <end position="174"/>
    </location>
</feature>
<feature type="binding site" evidence="1">
    <location>
        <position position="36"/>
    </location>
    <ligand>
        <name>substrate</name>
    </ligand>
</feature>
<feature type="binding site" evidence="1">
    <location>
        <position position="78"/>
    </location>
    <ligand>
        <name>substrate</name>
    </ligand>
</feature>
<feature type="binding site" evidence="1">
    <location>
        <position position="116"/>
    </location>
    <ligand>
        <name>substrate</name>
    </ligand>
</feature>
<feature type="binding site" evidence="1">
    <location>
        <position position="157"/>
    </location>
    <ligand>
        <name>substrate</name>
    </ligand>
</feature>
<gene>
    <name evidence="1" type="primary">ubiC</name>
    <name type="ordered locus">ETA_31050</name>
</gene>
<comment type="function">
    <text evidence="1">Removes the pyruvyl group from chorismate, with concomitant aromatization of the ring, to provide 4-hydroxybenzoate (4HB) for the ubiquinone pathway.</text>
</comment>
<comment type="catalytic activity">
    <reaction evidence="1">
        <text>chorismate = 4-hydroxybenzoate + pyruvate</text>
        <dbReference type="Rhea" id="RHEA:16505"/>
        <dbReference type="ChEBI" id="CHEBI:15361"/>
        <dbReference type="ChEBI" id="CHEBI:17879"/>
        <dbReference type="ChEBI" id="CHEBI:29748"/>
        <dbReference type="EC" id="4.1.3.40"/>
    </reaction>
</comment>
<comment type="pathway">
    <text evidence="1">Cofactor biosynthesis; ubiquinone biosynthesis.</text>
</comment>
<comment type="subunit">
    <text evidence="1">Monomer.</text>
</comment>
<comment type="subcellular location">
    <subcellularLocation>
        <location evidence="1">Cytoplasm</location>
    </subcellularLocation>
</comment>
<comment type="similarity">
    <text evidence="1">Belongs to the UbiC family.</text>
</comment>
<organism>
    <name type="scientific">Erwinia tasmaniensis (strain DSM 17950 / CFBP 7177 / CIP 109463 / NCPPB 4357 / Et1/99)</name>
    <dbReference type="NCBI Taxonomy" id="465817"/>
    <lineage>
        <taxon>Bacteria</taxon>
        <taxon>Pseudomonadati</taxon>
        <taxon>Pseudomonadota</taxon>
        <taxon>Gammaproteobacteria</taxon>
        <taxon>Enterobacterales</taxon>
        <taxon>Erwiniaceae</taxon>
        <taxon>Erwinia</taxon>
    </lineage>
</organism>
<reference key="1">
    <citation type="journal article" date="2008" name="Environ. Microbiol.">
        <title>The genome of Erwinia tasmaniensis strain Et1/99, a non-pathogenic bacterium in the genus Erwinia.</title>
        <authorList>
            <person name="Kube M."/>
            <person name="Migdoll A.M."/>
            <person name="Mueller I."/>
            <person name="Kuhl H."/>
            <person name="Beck A."/>
            <person name="Reinhardt R."/>
            <person name="Geider K."/>
        </authorList>
    </citation>
    <scope>NUCLEOTIDE SEQUENCE [LARGE SCALE GENOMIC DNA]</scope>
    <source>
        <strain>DSM 17950 / CFBP 7177 / CIP 109463 / NCPPB 4357 / Et1/99</strain>
    </source>
</reference>
<dbReference type="EC" id="4.1.3.40" evidence="1"/>
<dbReference type="EMBL" id="CU468135">
    <property type="protein sequence ID" value="CAO98151.1"/>
    <property type="molecule type" value="Genomic_DNA"/>
</dbReference>
<dbReference type="RefSeq" id="WP_012442801.1">
    <property type="nucleotide sequence ID" value="NC_010694.1"/>
</dbReference>
<dbReference type="SMR" id="B2VKA5"/>
<dbReference type="STRING" id="465817.ETA_31050"/>
<dbReference type="KEGG" id="eta:ETA_31050"/>
<dbReference type="eggNOG" id="COG3161">
    <property type="taxonomic scope" value="Bacteria"/>
</dbReference>
<dbReference type="HOGENOM" id="CLU_096824_1_0_6"/>
<dbReference type="OrthoDB" id="9789493at2"/>
<dbReference type="UniPathway" id="UPA00232"/>
<dbReference type="Proteomes" id="UP000001726">
    <property type="component" value="Chromosome"/>
</dbReference>
<dbReference type="GO" id="GO:0005829">
    <property type="term" value="C:cytosol"/>
    <property type="evidence" value="ECO:0007669"/>
    <property type="project" value="TreeGrafter"/>
</dbReference>
<dbReference type="GO" id="GO:0008813">
    <property type="term" value="F:chorismate lyase activity"/>
    <property type="evidence" value="ECO:0007669"/>
    <property type="project" value="UniProtKB-UniRule"/>
</dbReference>
<dbReference type="GO" id="GO:0042866">
    <property type="term" value="P:pyruvate biosynthetic process"/>
    <property type="evidence" value="ECO:0007669"/>
    <property type="project" value="UniProtKB-UniRule"/>
</dbReference>
<dbReference type="GO" id="GO:0006744">
    <property type="term" value="P:ubiquinone biosynthetic process"/>
    <property type="evidence" value="ECO:0007669"/>
    <property type="project" value="UniProtKB-UniRule"/>
</dbReference>
<dbReference type="Gene3D" id="3.40.1410.10">
    <property type="entry name" value="Chorismate lyase-like"/>
    <property type="match status" value="1"/>
</dbReference>
<dbReference type="HAMAP" id="MF_01632">
    <property type="entry name" value="UbiC"/>
    <property type="match status" value="1"/>
</dbReference>
<dbReference type="InterPro" id="IPR007440">
    <property type="entry name" value="Chorismate--pyruvate_lyase"/>
</dbReference>
<dbReference type="InterPro" id="IPR028978">
    <property type="entry name" value="Chorismate_lyase_/UTRA_dom_sf"/>
</dbReference>
<dbReference type="NCBIfam" id="NF008656">
    <property type="entry name" value="PRK11655.1"/>
    <property type="match status" value="1"/>
</dbReference>
<dbReference type="PANTHER" id="PTHR38683">
    <property type="entry name" value="CHORISMATE PYRUVATE-LYASE"/>
    <property type="match status" value="1"/>
</dbReference>
<dbReference type="PANTHER" id="PTHR38683:SF1">
    <property type="entry name" value="CHORISMATE PYRUVATE-LYASE"/>
    <property type="match status" value="1"/>
</dbReference>
<dbReference type="Pfam" id="PF04345">
    <property type="entry name" value="Chor_lyase"/>
    <property type="match status" value="1"/>
</dbReference>
<dbReference type="SUPFAM" id="SSF64288">
    <property type="entry name" value="Chorismate lyase-like"/>
    <property type="match status" value="1"/>
</dbReference>
<keyword id="KW-0963">Cytoplasm</keyword>
<keyword id="KW-0456">Lyase</keyword>
<keyword id="KW-0670">Pyruvate</keyword>
<keyword id="KW-1185">Reference proteome</keyword>
<keyword id="KW-0831">Ubiquinone biosynthesis</keyword>
<proteinExistence type="inferred from homology"/>